<name>PYRC_STAAN</name>
<organism>
    <name type="scientific">Staphylococcus aureus (strain N315)</name>
    <dbReference type="NCBI Taxonomy" id="158879"/>
    <lineage>
        <taxon>Bacteria</taxon>
        <taxon>Bacillati</taxon>
        <taxon>Bacillota</taxon>
        <taxon>Bacilli</taxon>
        <taxon>Bacillales</taxon>
        <taxon>Staphylococcaceae</taxon>
        <taxon>Staphylococcus</taxon>
    </lineage>
</organism>
<evidence type="ECO:0000255" key="1">
    <source>
        <dbReference type="HAMAP-Rule" id="MF_00220"/>
    </source>
</evidence>
<proteinExistence type="evidence at protein level"/>
<reference key="1">
    <citation type="journal article" date="2001" name="Lancet">
        <title>Whole genome sequencing of meticillin-resistant Staphylococcus aureus.</title>
        <authorList>
            <person name="Kuroda M."/>
            <person name="Ohta T."/>
            <person name="Uchiyama I."/>
            <person name="Baba T."/>
            <person name="Yuzawa H."/>
            <person name="Kobayashi I."/>
            <person name="Cui L."/>
            <person name="Oguchi A."/>
            <person name="Aoki K."/>
            <person name="Nagai Y."/>
            <person name="Lian J.-Q."/>
            <person name="Ito T."/>
            <person name="Kanamori M."/>
            <person name="Matsumaru H."/>
            <person name="Maruyama A."/>
            <person name="Murakami H."/>
            <person name="Hosoyama A."/>
            <person name="Mizutani-Ui Y."/>
            <person name="Takahashi N.K."/>
            <person name="Sawano T."/>
            <person name="Inoue R."/>
            <person name="Kaito C."/>
            <person name="Sekimizu K."/>
            <person name="Hirakawa H."/>
            <person name="Kuhara S."/>
            <person name="Goto S."/>
            <person name="Yabuzaki J."/>
            <person name="Kanehisa M."/>
            <person name="Yamashita A."/>
            <person name="Oshima K."/>
            <person name="Furuya K."/>
            <person name="Yoshino C."/>
            <person name="Shiba T."/>
            <person name="Hattori M."/>
            <person name="Ogasawara N."/>
            <person name="Hayashi H."/>
            <person name="Hiramatsu K."/>
        </authorList>
    </citation>
    <scope>NUCLEOTIDE SEQUENCE [LARGE SCALE GENOMIC DNA]</scope>
    <source>
        <strain>N315</strain>
    </source>
</reference>
<reference key="2">
    <citation type="submission" date="2005-11" db="UniProtKB">
        <title>Shotgun proteomic analysis of total protein extract of S. aureus S30 versus N315.</title>
        <authorList>
            <person name="Stenz L."/>
        </authorList>
    </citation>
    <scope>IDENTIFICATION BY MASS SPECTROMETRY</scope>
</reference>
<reference key="3">
    <citation type="submission" date="2007-10" db="UniProtKB">
        <title>Shotgun proteomic analysis of total and membrane protein extracts of S. aureus strain N315.</title>
        <authorList>
            <person name="Vaezzadeh A.R."/>
            <person name="Deshusses J."/>
            <person name="Lescuyer P."/>
            <person name="Hochstrasser D.F."/>
        </authorList>
    </citation>
    <scope>IDENTIFICATION BY MASS SPECTROMETRY [LARGE SCALE ANALYSIS]</scope>
    <source>
        <strain>N315</strain>
    </source>
</reference>
<feature type="chain" id="PRO_0000147248" description="Dihydroorotase">
    <location>
        <begin position="1"/>
        <end position="424"/>
    </location>
</feature>
<feature type="active site" evidence="1">
    <location>
        <position position="303"/>
    </location>
</feature>
<feature type="binding site" evidence="1">
    <location>
        <position position="58"/>
    </location>
    <ligand>
        <name>Zn(2+)</name>
        <dbReference type="ChEBI" id="CHEBI:29105"/>
        <label>1</label>
    </ligand>
</feature>
<feature type="binding site" evidence="1">
    <location>
        <begin position="60"/>
        <end position="62"/>
    </location>
    <ligand>
        <name>substrate</name>
    </ligand>
</feature>
<feature type="binding site" evidence="1">
    <location>
        <position position="60"/>
    </location>
    <ligand>
        <name>Zn(2+)</name>
        <dbReference type="ChEBI" id="CHEBI:29105"/>
        <label>1</label>
    </ligand>
</feature>
<feature type="binding site" evidence="1">
    <location>
        <position position="92"/>
    </location>
    <ligand>
        <name>substrate</name>
    </ligand>
</feature>
<feature type="binding site" evidence="1">
    <location>
        <position position="150"/>
    </location>
    <ligand>
        <name>Zn(2+)</name>
        <dbReference type="ChEBI" id="CHEBI:29105"/>
        <label>1</label>
    </ligand>
</feature>
<feature type="binding site" evidence="1">
    <location>
        <position position="150"/>
    </location>
    <ligand>
        <name>Zn(2+)</name>
        <dbReference type="ChEBI" id="CHEBI:29105"/>
        <label>2</label>
    </ligand>
</feature>
<feature type="binding site" evidence="1">
    <location>
        <position position="177"/>
    </location>
    <ligand>
        <name>Zn(2+)</name>
        <dbReference type="ChEBI" id="CHEBI:29105"/>
        <label>2</label>
    </ligand>
</feature>
<feature type="binding site" evidence="1">
    <location>
        <position position="230"/>
    </location>
    <ligand>
        <name>Zn(2+)</name>
        <dbReference type="ChEBI" id="CHEBI:29105"/>
        <label>2</label>
    </ligand>
</feature>
<feature type="binding site" evidence="1">
    <location>
        <position position="276"/>
    </location>
    <ligand>
        <name>substrate</name>
    </ligand>
</feature>
<feature type="binding site" evidence="1">
    <location>
        <position position="303"/>
    </location>
    <ligand>
        <name>Zn(2+)</name>
        <dbReference type="ChEBI" id="CHEBI:29105"/>
        <label>1</label>
    </ligand>
</feature>
<feature type="binding site" evidence="1">
    <location>
        <position position="307"/>
    </location>
    <ligand>
        <name>substrate</name>
    </ligand>
</feature>
<feature type="binding site" evidence="1">
    <location>
        <begin position="321"/>
        <end position="322"/>
    </location>
    <ligand>
        <name>substrate</name>
    </ligand>
</feature>
<keyword id="KW-0378">Hydrolase</keyword>
<keyword id="KW-0479">Metal-binding</keyword>
<keyword id="KW-0665">Pyrimidine biosynthesis</keyword>
<keyword id="KW-0862">Zinc</keyword>
<gene>
    <name evidence="1" type="primary">pyrC</name>
    <name type="ordered locus">SA1044</name>
</gene>
<accession>P65906</accession>
<accession>Q99UR7</accession>
<protein>
    <recommendedName>
        <fullName evidence="1">Dihydroorotase</fullName>
        <shortName evidence="1">DHOase</shortName>
        <ecNumber evidence="1">3.5.2.3</ecNumber>
    </recommendedName>
</protein>
<dbReference type="EC" id="3.5.2.3" evidence="1"/>
<dbReference type="EMBL" id="BA000018">
    <property type="protein sequence ID" value="BAB42296.1"/>
    <property type="molecule type" value="Genomic_DNA"/>
</dbReference>
<dbReference type="PIR" id="D89892">
    <property type="entry name" value="D89892"/>
</dbReference>
<dbReference type="RefSeq" id="WP_000767028.1">
    <property type="nucleotide sequence ID" value="NC_002745.2"/>
</dbReference>
<dbReference type="SMR" id="P65906"/>
<dbReference type="MEROPS" id="M38.972"/>
<dbReference type="EnsemblBacteria" id="BAB42296">
    <property type="protein sequence ID" value="BAB42296"/>
    <property type="gene ID" value="BAB42296"/>
</dbReference>
<dbReference type="KEGG" id="sau:SA1044"/>
<dbReference type="HOGENOM" id="CLU_015572_1_0_9"/>
<dbReference type="UniPathway" id="UPA00070">
    <property type="reaction ID" value="UER00117"/>
</dbReference>
<dbReference type="GO" id="GO:0005737">
    <property type="term" value="C:cytoplasm"/>
    <property type="evidence" value="ECO:0007669"/>
    <property type="project" value="TreeGrafter"/>
</dbReference>
<dbReference type="GO" id="GO:0004038">
    <property type="term" value="F:allantoinase activity"/>
    <property type="evidence" value="ECO:0007669"/>
    <property type="project" value="TreeGrafter"/>
</dbReference>
<dbReference type="GO" id="GO:0004151">
    <property type="term" value="F:dihydroorotase activity"/>
    <property type="evidence" value="ECO:0007669"/>
    <property type="project" value="UniProtKB-UniRule"/>
</dbReference>
<dbReference type="GO" id="GO:0008270">
    <property type="term" value="F:zinc ion binding"/>
    <property type="evidence" value="ECO:0007669"/>
    <property type="project" value="UniProtKB-UniRule"/>
</dbReference>
<dbReference type="GO" id="GO:0044205">
    <property type="term" value="P:'de novo' UMP biosynthetic process"/>
    <property type="evidence" value="ECO:0007669"/>
    <property type="project" value="UniProtKB-UniRule"/>
</dbReference>
<dbReference type="GO" id="GO:0006145">
    <property type="term" value="P:purine nucleobase catabolic process"/>
    <property type="evidence" value="ECO:0007669"/>
    <property type="project" value="TreeGrafter"/>
</dbReference>
<dbReference type="CDD" id="cd01317">
    <property type="entry name" value="DHOase_IIa"/>
    <property type="match status" value="1"/>
</dbReference>
<dbReference type="Gene3D" id="3.20.20.140">
    <property type="entry name" value="Metal-dependent hydrolases"/>
    <property type="match status" value="1"/>
</dbReference>
<dbReference type="Gene3D" id="2.30.40.10">
    <property type="entry name" value="Urease, subunit C, domain 1"/>
    <property type="match status" value="2"/>
</dbReference>
<dbReference type="HAMAP" id="MF_00220_B">
    <property type="entry name" value="PyrC_classI_B"/>
    <property type="match status" value="1"/>
</dbReference>
<dbReference type="InterPro" id="IPR006680">
    <property type="entry name" value="Amidohydro-rel"/>
</dbReference>
<dbReference type="InterPro" id="IPR004722">
    <property type="entry name" value="DHOase"/>
</dbReference>
<dbReference type="InterPro" id="IPR050138">
    <property type="entry name" value="DHOase/Allantoinase_Hydrolase"/>
</dbReference>
<dbReference type="InterPro" id="IPR002195">
    <property type="entry name" value="Dihydroorotase_CS"/>
</dbReference>
<dbReference type="InterPro" id="IPR011059">
    <property type="entry name" value="Metal-dep_hydrolase_composite"/>
</dbReference>
<dbReference type="InterPro" id="IPR032466">
    <property type="entry name" value="Metal_Hydrolase"/>
</dbReference>
<dbReference type="NCBIfam" id="NF006837">
    <property type="entry name" value="PRK09357.1-2"/>
    <property type="match status" value="1"/>
</dbReference>
<dbReference type="NCBIfam" id="TIGR00857">
    <property type="entry name" value="pyrC_multi"/>
    <property type="match status" value="1"/>
</dbReference>
<dbReference type="PANTHER" id="PTHR43668">
    <property type="entry name" value="ALLANTOINASE"/>
    <property type="match status" value="1"/>
</dbReference>
<dbReference type="PANTHER" id="PTHR43668:SF2">
    <property type="entry name" value="ALLANTOINASE"/>
    <property type="match status" value="1"/>
</dbReference>
<dbReference type="Pfam" id="PF01979">
    <property type="entry name" value="Amidohydro_1"/>
    <property type="match status" value="1"/>
</dbReference>
<dbReference type="SUPFAM" id="SSF51338">
    <property type="entry name" value="Composite domain of metallo-dependent hydrolases"/>
    <property type="match status" value="1"/>
</dbReference>
<dbReference type="SUPFAM" id="SSF51556">
    <property type="entry name" value="Metallo-dependent hydrolases"/>
    <property type="match status" value="1"/>
</dbReference>
<dbReference type="PROSITE" id="PS00482">
    <property type="entry name" value="DIHYDROOROTASE_1"/>
    <property type="match status" value="1"/>
</dbReference>
<dbReference type="PROSITE" id="PS00483">
    <property type="entry name" value="DIHYDROOROTASE_2"/>
    <property type="match status" value="1"/>
</dbReference>
<comment type="function">
    <text evidence="1">Catalyzes the reversible cyclization of carbamoyl aspartate to dihydroorotate.</text>
</comment>
<comment type="catalytic activity">
    <reaction evidence="1">
        <text>(S)-dihydroorotate + H2O = N-carbamoyl-L-aspartate + H(+)</text>
        <dbReference type="Rhea" id="RHEA:24296"/>
        <dbReference type="ChEBI" id="CHEBI:15377"/>
        <dbReference type="ChEBI" id="CHEBI:15378"/>
        <dbReference type="ChEBI" id="CHEBI:30864"/>
        <dbReference type="ChEBI" id="CHEBI:32814"/>
        <dbReference type="EC" id="3.5.2.3"/>
    </reaction>
</comment>
<comment type="cofactor">
    <cofactor evidence="1">
        <name>Zn(2+)</name>
        <dbReference type="ChEBI" id="CHEBI:29105"/>
    </cofactor>
    <text evidence="1">Binds 2 Zn(2+) ions per subunit.</text>
</comment>
<comment type="pathway">
    <text evidence="1">Pyrimidine metabolism; UMP biosynthesis via de novo pathway; (S)-dihydroorotate from bicarbonate: step 3/3.</text>
</comment>
<comment type="similarity">
    <text evidence="1">Belongs to the metallo-dependent hydrolases superfamily. DHOase family. Class I DHOase subfamily.</text>
</comment>
<sequence length="424" mass="46372">MKLIKNGKVLQNGELQQADILIDGKVIKQIAPAIEPSNGVDIIDAKGHFVSPGFVDVHVHLREPGGEYKETIETGTKAAARGGFTTVCPMPNTRPVPDSVEHFEALQKLIDDNAQVRVLPYASITTRQLGKELVDFPALVKEGAFAFTDDGVGVQTASMMYEGMIEAAKVNKAIVAHCEDNSLIYGGAMHEGKRSKELGIPGIPNICESVQIARDVLLAEAAGCHYHVCHVSTKESVRVIRDAKRAGIHVTAEVTPHHLLLTEDDIPGNNAIYKMNPPLRSTEDREALLEGLLDGTIDCIATDHAPHARDEKAQPMEKAPFGIVGSETAFPLLYTHFVKNGDWTLQQLVDYLTIKPCETFNLEYGTLKENGYADLTIIDLDSEQEIKGEDFLSKADNTPFIGYKVYGNPILTMVEGEVKFEGDK</sequence>